<protein>
    <recommendedName>
        <fullName evidence="2">Translation initiation factor IF-2</fullName>
    </recommendedName>
</protein>
<dbReference type="EMBL" id="CR628337">
    <property type="protein sequence ID" value="CAH16930.1"/>
    <property type="molecule type" value="Genomic_DNA"/>
</dbReference>
<dbReference type="RefSeq" id="WP_011216621.1">
    <property type="nucleotide sequence ID" value="NC_006369.1"/>
</dbReference>
<dbReference type="SMR" id="Q5WT36"/>
<dbReference type="KEGG" id="lpf:lpl2689"/>
<dbReference type="LegioList" id="lpl2689"/>
<dbReference type="HOGENOM" id="CLU_006301_6_1_6"/>
<dbReference type="Proteomes" id="UP000002517">
    <property type="component" value="Chromosome"/>
</dbReference>
<dbReference type="GO" id="GO:0005829">
    <property type="term" value="C:cytosol"/>
    <property type="evidence" value="ECO:0007669"/>
    <property type="project" value="TreeGrafter"/>
</dbReference>
<dbReference type="GO" id="GO:0005525">
    <property type="term" value="F:GTP binding"/>
    <property type="evidence" value="ECO:0007669"/>
    <property type="project" value="UniProtKB-KW"/>
</dbReference>
<dbReference type="GO" id="GO:0003924">
    <property type="term" value="F:GTPase activity"/>
    <property type="evidence" value="ECO:0007669"/>
    <property type="project" value="UniProtKB-UniRule"/>
</dbReference>
<dbReference type="GO" id="GO:0097216">
    <property type="term" value="F:guanosine tetraphosphate binding"/>
    <property type="evidence" value="ECO:0007669"/>
    <property type="project" value="UniProtKB-ARBA"/>
</dbReference>
<dbReference type="GO" id="GO:0003743">
    <property type="term" value="F:translation initiation factor activity"/>
    <property type="evidence" value="ECO:0007669"/>
    <property type="project" value="UniProtKB-UniRule"/>
</dbReference>
<dbReference type="CDD" id="cd01887">
    <property type="entry name" value="IF2_eIF5B"/>
    <property type="match status" value="1"/>
</dbReference>
<dbReference type="CDD" id="cd03702">
    <property type="entry name" value="IF2_mtIF2_II"/>
    <property type="match status" value="1"/>
</dbReference>
<dbReference type="CDD" id="cd03692">
    <property type="entry name" value="mtIF2_IVc"/>
    <property type="match status" value="1"/>
</dbReference>
<dbReference type="FunFam" id="2.40.30.10:FF:000007">
    <property type="entry name" value="Translation initiation factor IF-2"/>
    <property type="match status" value="1"/>
</dbReference>
<dbReference type="FunFam" id="2.40.30.10:FF:000008">
    <property type="entry name" value="Translation initiation factor IF-2"/>
    <property type="match status" value="1"/>
</dbReference>
<dbReference type="FunFam" id="3.40.50.10050:FF:000001">
    <property type="entry name" value="Translation initiation factor IF-2"/>
    <property type="match status" value="1"/>
</dbReference>
<dbReference type="FunFam" id="3.40.50.300:FF:000019">
    <property type="entry name" value="Translation initiation factor IF-2"/>
    <property type="match status" value="1"/>
</dbReference>
<dbReference type="Gene3D" id="3.40.50.300">
    <property type="entry name" value="P-loop containing nucleotide triphosphate hydrolases"/>
    <property type="match status" value="1"/>
</dbReference>
<dbReference type="Gene3D" id="3.30.56.50">
    <property type="entry name" value="Putative DNA-binding domain, N-terminal subdomain of bacterial translation initiation factor IF2"/>
    <property type="match status" value="1"/>
</dbReference>
<dbReference type="Gene3D" id="2.40.30.10">
    <property type="entry name" value="Translation factors"/>
    <property type="match status" value="2"/>
</dbReference>
<dbReference type="Gene3D" id="3.40.50.10050">
    <property type="entry name" value="Translation initiation factor IF- 2, domain 3"/>
    <property type="match status" value="1"/>
</dbReference>
<dbReference type="HAMAP" id="MF_00100_B">
    <property type="entry name" value="IF_2_B"/>
    <property type="match status" value="1"/>
</dbReference>
<dbReference type="InterPro" id="IPR009061">
    <property type="entry name" value="DNA-bd_dom_put_sf"/>
</dbReference>
<dbReference type="InterPro" id="IPR053905">
    <property type="entry name" value="EF-G-like_DII"/>
</dbReference>
<dbReference type="InterPro" id="IPR004161">
    <property type="entry name" value="EFTu-like_2"/>
</dbReference>
<dbReference type="InterPro" id="IPR013575">
    <property type="entry name" value="IF2_assoc_dom_bac"/>
</dbReference>
<dbReference type="InterPro" id="IPR044145">
    <property type="entry name" value="IF2_II"/>
</dbReference>
<dbReference type="InterPro" id="IPR006847">
    <property type="entry name" value="IF2_N"/>
</dbReference>
<dbReference type="InterPro" id="IPR027417">
    <property type="entry name" value="P-loop_NTPase"/>
</dbReference>
<dbReference type="InterPro" id="IPR005225">
    <property type="entry name" value="Small_GTP-bd"/>
</dbReference>
<dbReference type="InterPro" id="IPR000795">
    <property type="entry name" value="T_Tr_GTP-bd_dom"/>
</dbReference>
<dbReference type="InterPro" id="IPR000178">
    <property type="entry name" value="TF_IF2_bacterial-like"/>
</dbReference>
<dbReference type="InterPro" id="IPR015760">
    <property type="entry name" value="TIF_IF2"/>
</dbReference>
<dbReference type="InterPro" id="IPR023115">
    <property type="entry name" value="TIF_IF2_dom3"/>
</dbReference>
<dbReference type="InterPro" id="IPR036925">
    <property type="entry name" value="TIF_IF2_dom3_sf"/>
</dbReference>
<dbReference type="InterPro" id="IPR009000">
    <property type="entry name" value="Transl_B-barrel_sf"/>
</dbReference>
<dbReference type="NCBIfam" id="TIGR00487">
    <property type="entry name" value="IF-2"/>
    <property type="match status" value="1"/>
</dbReference>
<dbReference type="NCBIfam" id="TIGR00231">
    <property type="entry name" value="small_GTP"/>
    <property type="match status" value="1"/>
</dbReference>
<dbReference type="PANTHER" id="PTHR43381:SF5">
    <property type="entry name" value="TR-TYPE G DOMAIN-CONTAINING PROTEIN"/>
    <property type="match status" value="1"/>
</dbReference>
<dbReference type="PANTHER" id="PTHR43381">
    <property type="entry name" value="TRANSLATION INITIATION FACTOR IF-2-RELATED"/>
    <property type="match status" value="1"/>
</dbReference>
<dbReference type="Pfam" id="PF22042">
    <property type="entry name" value="EF-G_D2"/>
    <property type="match status" value="1"/>
</dbReference>
<dbReference type="Pfam" id="PF00009">
    <property type="entry name" value="GTP_EFTU"/>
    <property type="match status" value="1"/>
</dbReference>
<dbReference type="Pfam" id="PF03144">
    <property type="entry name" value="GTP_EFTU_D2"/>
    <property type="match status" value="1"/>
</dbReference>
<dbReference type="Pfam" id="PF11987">
    <property type="entry name" value="IF-2"/>
    <property type="match status" value="1"/>
</dbReference>
<dbReference type="Pfam" id="PF08364">
    <property type="entry name" value="IF2_assoc"/>
    <property type="match status" value="1"/>
</dbReference>
<dbReference type="Pfam" id="PF04760">
    <property type="entry name" value="IF2_N"/>
    <property type="match status" value="2"/>
</dbReference>
<dbReference type="SUPFAM" id="SSF52156">
    <property type="entry name" value="Initiation factor IF2/eIF5b, domain 3"/>
    <property type="match status" value="1"/>
</dbReference>
<dbReference type="SUPFAM" id="SSF52540">
    <property type="entry name" value="P-loop containing nucleoside triphosphate hydrolases"/>
    <property type="match status" value="1"/>
</dbReference>
<dbReference type="SUPFAM" id="SSF46955">
    <property type="entry name" value="Putative DNA-binding domain"/>
    <property type="match status" value="1"/>
</dbReference>
<dbReference type="SUPFAM" id="SSF50447">
    <property type="entry name" value="Translation proteins"/>
    <property type="match status" value="2"/>
</dbReference>
<dbReference type="PROSITE" id="PS51722">
    <property type="entry name" value="G_TR_2"/>
    <property type="match status" value="1"/>
</dbReference>
<dbReference type="PROSITE" id="PS01176">
    <property type="entry name" value="IF2"/>
    <property type="match status" value="1"/>
</dbReference>
<proteinExistence type="inferred from homology"/>
<gene>
    <name evidence="2" type="primary">infB</name>
    <name type="ordered locus">lpl2689</name>
</gene>
<reference key="1">
    <citation type="journal article" date="2004" name="Nat. Genet.">
        <title>Evidence in the Legionella pneumophila genome for exploitation of host cell functions and high genome plasticity.</title>
        <authorList>
            <person name="Cazalet C."/>
            <person name="Rusniok C."/>
            <person name="Brueggemann H."/>
            <person name="Zidane N."/>
            <person name="Magnier A."/>
            <person name="Ma L."/>
            <person name="Tichit M."/>
            <person name="Jarraud S."/>
            <person name="Bouchier C."/>
            <person name="Vandenesch F."/>
            <person name="Kunst F."/>
            <person name="Etienne J."/>
            <person name="Glaser P."/>
            <person name="Buchrieser C."/>
        </authorList>
    </citation>
    <scope>NUCLEOTIDE SEQUENCE [LARGE SCALE GENOMIC DNA]</scope>
    <source>
        <strain>Lens</strain>
    </source>
</reference>
<sequence>MADVTVKQLAQVVGIPVERLLNQLQEAGLSFTDDQQTVNEEQKRILLNHLKGSSNRDISAAPERITLRRKSMSQVTVGHDMHSGKTVNIEVRKKKTFIKRSAIPEQAEVEEPVVPPVVEEPAHEEITVVSEVSADTSELKETEEHPVIEPVAALDETVKEEEKINSEENTAESQDELTHANTDVIENLVDVVEEAIPVSKKEEVKPEKVSKKKHLEQTDSDISEFKKGKKKPKYHTFEHDEEEQELHRRGGRSKFKKKKGTEKSDKYREAEETLTHGFALPTAPIVREVLIPETITVAELAKRMSVKAAEVIKVMMSLGAMATINQVIDQETSVIVVEEMGHKPVIIKEDAVETGLGEAISKGTKTEGRAPVVTIMGHVDHGKTSLLDYIRRTKVAAGEAGGITQHIGAYHVSTPKGDITFLDTPGHAAFTAMRARGAQATDIVILIVAADDGVKPQTIEAIQHAKAAKVPIIVAINKMDKPDADPERVMNELSVQEVIPEAWGGDTMFVNISAKSGMGIDDLLDAILLQSEVLELKAVTDGAAKGVVIESRLDKGRGPVATVLVQSGTLHKGDILLAGFQYGRVRALVSDNGDLVDSAGPSIPVEVLGLSAIPHAGDEAVVVPDEKKAREVALFRQGRFRDVKLARRQKTTIEGIMENMTATESKVLNIVLKADVQGSLEAISDALTKLSTDEVKVEVISSGVGGITESDVHLAIASNAILIGFNVRADGTAKRLAEQESVSIHYYSVIYDIVDQIKGALTGMLAPQFKEEIVGIAEVRDVFKSPKIGAIAGCMVIEGVVKRNNPIRVLRSNVVIYEGTLESLRRFKDDVLEVRQGFECGIGVKNYNDVKPGDLIEVFETVEIKRDL</sequence>
<name>IF2_LEGPL</name>
<organism>
    <name type="scientific">Legionella pneumophila (strain Lens)</name>
    <dbReference type="NCBI Taxonomy" id="297245"/>
    <lineage>
        <taxon>Bacteria</taxon>
        <taxon>Pseudomonadati</taxon>
        <taxon>Pseudomonadota</taxon>
        <taxon>Gammaproteobacteria</taxon>
        <taxon>Legionellales</taxon>
        <taxon>Legionellaceae</taxon>
        <taxon>Legionella</taxon>
    </lineage>
</organism>
<comment type="function">
    <text evidence="2">One of the essential components for the initiation of protein synthesis. Protects formylmethionyl-tRNA from spontaneous hydrolysis and promotes its binding to the 30S ribosomal subunits. Also involved in the hydrolysis of GTP during the formation of the 70S ribosomal complex.</text>
</comment>
<comment type="subcellular location">
    <subcellularLocation>
        <location evidence="2">Cytoplasm</location>
    </subcellularLocation>
</comment>
<comment type="similarity">
    <text evidence="2">Belongs to the TRAFAC class translation factor GTPase superfamily. Classic translation factor GTPase family. IF-2 subfamily.</text>
</comment>
<feature type="chain" id="PRO_0000228208" description="Translation initiation factor IF-2">
    <location>
        <begin position="1"/>
        <end position="868"/>
    </location>
</feature>
<feature type="domain" description="tr-type G">
    <location>
        <begin position="368"/>
        <end position="537"/>
    </location>
</feature>
<feature type="region of interest" description="Disordered" evidence="3">
    <location>
        <begin position="158"/>
        <end position="178"/>
    </location>
</feature>
<feature type="region of interest" description="Disordered" evidence="3">
    <location>
        <begin position="200"/>
        <end position="269"/>
    </location>
</feature>
<feature type="region of interest" description="G1" evidence="1">
    <location>
        <begin position="377"/>
        <end position="384"/>
    </location>
</feature>
<feature type="region of interest" description="G2" evidence="1">
    <location>
        <begin position="402"/>
        <end position="406"/>
    </location>
</feature>
<feature type="region of interest" description="G3" evidence="1">
    <location>
        <begin position="423"/>
        <end position="426"/>
    </location>
</feature>
<feature type="region of interest" description="G4" evidence="1">
    <location>
        <begin position="477"/>
        <end position="480"/>
    </location>
</feature>
<feature type="region of interest" description="G5" evidence="1">
    <location>
        <begin position="513"/>
        <end position="515"/>
    </location>
</feature>
<feature type="compositionally biased region" description="Basic and acidic residues" evidence="3">
    <location>
        <begin position="200"/>
        <end position="209"/>
    </location>
</feature>
<feature type="compositionally biased region" description="Basic residues" evidence="3">
    <location>
        <begin position="249"/>
        <end position="260"/>
    </location>
</feature>
<feature type="binding site" evidence="2">
    <location>
        <begin position="377"/>
        <end position="384"/>
    </location>
    <ligand>
        <name>GTP</name>
        <dbReference type="ChEBI" id="CHEBI:37565"/>
    </ligand>
</feature>
<feature type="binding site" evidence="2">
    <location>
        <begin position="423"/>
        <end position="427"/>
    </location>
    <ligand>
        <name>GTP</name>
        <dbReference type="ChEBI" id="CHEBI:37565"/>
    </ligand>
</feature>
<feature type="binding site" evidence="2">
    <location>
        <begin position="477"/>
        <end position="480"/>
    </location>
    <ligand>
        <name>GTP</name>
        <dbReference type="ChEBI" id="CHEBI:37565"/>
    </ligand>
</feature>
<evidence type="ECO:0000250" key="1"/>
<evidence type="ECO:0000255" key="2">
    <source>
        <dbReference type="HAMAP-Rule" id="MF_00100"/>
    </source>
</evidence>
<evidence type="ECO:0000256" key="3">
    <source>
        <dbReference type="SAM" id="MobiDB-lite"/>
    </source>
</evidence>
<accession>Q5WT36</accession>
<keyword id="KW-0963">Cytoplasm</keyword>
<keyword id="KW-0342">GTP-binding</keyword>
<keyword id="KW-0396">Initiation factor</keyword>
<keyword id="KW-0547">Nucleotide-binding</keyword>
<keyword id="KW-0648">Protein biosynthesis</keyword>